<accession>Q0AK35</accession>
<keyword id="KW-1185">Reference proteome</keyword>
<keyword id="KW-0687">Ribonucleoprotein</keyword>
<keyword id="KW-0689">Ribosomal protein</keyword>
<keyword id="KW-0694">RNA-binding</keyword>
<keyword id="KW-0699">rRNA-binding</keyword>
<sequence length="88" mass="9636">MANTNSAKKMVRKIARRTAVNKARRSRVRTFVKKVEMAITSGDQAAAKTALVEAESELMRAVGKGVYHKNTGSRKVSRLSARVKSMSA</sequence>
<comment type="function">
    <text evidence="1">Binds directly to 16S ribosomal RNA.</text>
</comment>
<comment type="similarity">
    <text evidence="1">Belongs to the bacterial ribosomal protein bS20 family.</text>
</comment>
<dbReference type="EMBL" id="CP000449">
    <property type="protein sequence ID" value="ABI67358.1"/>
    <property type="molecule type" value="Genomic_DNA"/>
</dbReference>
<dbReference type="RefSeq" id="WP_011645002.1">
    <property type="nucleotide sequence ID" value="NC_008347.1"/>
</dbReference>
<dbReference type="SMR" id="Q0AK35"/>
<dbReference type="STRING" id="394221.Mmar10_3079"/>
<dbReference type="KEGG" id="mmr:Mmar10_3079"/>
<dbReference type="eggNOG" id="COG0268">
    <property type="taxonomic scope" value="Bacteria"/>
</dbReference>
<dbReference type="HOGENOM" id="CLU_160655_3_0_5"/>
<dbReference type="OrthoDB" id="9807974at2"/>
<dbReference type="Proteomes" id="UP000001964">
    <property type="component" value="Chromosome"/>
</dbReference>
<dbReference type="GO" id="GO:0005829">
    <property type="term" value="C:cytosol"/>
    <property type="evidence" value="ECO:0007669"/>
    <property type="project" value="TreeGrafter"/>
</dbReference>
<dbReference type="GO" id="GO:0015935">
    <property type="term" value="C:small ribosomal subunit"/>
    <property type="evidence" value="ECO:0007669"/>
    <property type="project" value="TreeGrafter"/>
</dbReference>
<dbReference type="GO" id="GO:0070181">
    <property type="term" value="F:small ribosomal subunit rRNA binding"/>
    <property type="evidence" value="ECO:0007669"/>
    <property type="project" value="TreeGrafter"/>
</dbReference>
<dbReference type="GO" id="GO:0003735">
    <property type="term" value="F:structural constituent of ribosome"/>
    <property type="evidence" value="ECO:0007669"/>
    <property type="project" value="InterPro"/>
</dbReference>
<dbReference type="GO" id="GO:0006412">
    <property type="term" value="P:translation"/>
    <property type="evidence" value="ECO:0007669"/>
    <property type="project" value="UniProtKB-UniRule"/>
</dbReference>
<dbReference type="FunFam" id="1.20.58.110:FF:000001">
    <property type="entry name" value="30S ribosomal protein S20"/>
    <property type="match status" value="1"/>
</dbReference>
<dbReference type="Gene3D" id="1.20.58.110">
    <property type="entry name" value="Ribosomal protein S20"/>
    <property type="match status" value="1"/>
</dbReference>
<dbReference type="HAMAP" id="MF_00500">
    <property type="entry name" value="Ribosomal_bS20"/>
    <property type="match status" value="1"/>
</dbReference>
<dbReference type="InterPro" id="IPR002583">
    <property type="entry name" value="Ribosomal_bS20"/>
</dbReference>
<dbReference type="InterPro" id="IPR036510">
    <property type="entry name" value="Ribosomal_bS20_sf"/>
</dbReference>
<dbReference type="NCBIfam" id="TIGR00029">
    <property type="entry name" value="S20"/>
    <property type="match status" value="1"/>
</dbReference>
<dbReference type="PANTHER" id="PTHR33398">
    <property type="entry name" value="30S RIBOSOMAL PROTEIN S20"/>
    <property type="match status" value="1"/>
</dbReference>
<dbReference type="PANTHER" id="PTHR33398:SF1">
    <property type="entry name" value="SMALL RIBOSOMAL SUBUNIT PROTEIN BS20C"/>
    <property type="match status" value="1"/>
</dbReference>
<dbReference type="Pfam" id="PF01649">
    <property type="entry name" value="Ribosomal_S20p"/>
    <property type="match status" value="1"/>
</dbReference>
<dbReference type="SUPFAM" id="SSF46992">
    <property type="entry name" value="Ribosomal protein S20"/>
    <property type="match status" value="1"/>
</dbReference>
<feature type="chain" id="PRO_1000014602" description="Small ribosomal subunit protein bS20">
    <location>
        <begin position="1"/>
        <end position="88"/>
    </location>
</feature>
<protein>
    <recommendedName>
        <fullName evidence="1">Small ribosomal subunit protein bS20</fullName>
    </recommendedName>
    <alternativeName>
        <fullName evidence="2">30S ribosomal protein S20</fullName>
    </alternativeName>
</protein>
<gene>
    <name evidence="1" type="primary">rpsT</name>
    <name type="ordered locus">Mmar10_3079</name>
</gene>
<proteinExistence type="inferred from homology"/>
<evidence type="ECO:0000255" key="1">
    <source>
        <dbReference type="HAMAP-Rule" id="MF_00500"/>
    </source>
</evidence>
<evidence type="ECO:0000305" key="2"/>
<organism>
    <name type="scientific">Maricaulis maris (strain MCS10)</name>
    <name type="common">Caulobacter maris</name>
    <dbReference type="NCBI Taxonomy" id="394221"/>
    <lineage>
        <taxon>Bacteria</taxon>
        <taxon>Pseudomonadati</taxon>
        <taxon>Pseudomonadota</taxon>
        <taxon>Alphaproteobacteria</taxon>
        <taxon>Maricaulales</taxon>
        <taxon>Maricaulaceae</taxon>
        <taxon>Maricaulis</taxon>
    </lineage>
</organism>
<reference key="1">
    <citation type="submission" date="2006-08" db="EMBL/GenBank/DDBJ databases">
        <title>Complete sequence of Maricaulis maris MCS10.</title>
        <authorList>
            <consortium name="US DOE Joint Genome Institute"/>
            <person name="Copeland A."/>
            <person name="Lucas S."/>
            <person name="Lapidus A."/>
            <person name="Barry K."/>
            <person name="Detter J.C."/>
            <person name="Glavina del Rio T."/>
            <person name="Hammon N."/>
            <person name="Israni S."/>
            <person name="Dalin E."/>
            <person name="Tice H."/>
            <person name="Pitluck S."/>
            <person name="Saunders E."/>
            <person name="Brettin T."/>
            <person name="Bruce D."/>
            <person name="Han C."/>
            <person name="Tapia R."/>
            <person name="Gilna P."/>
            <person name="Schmutz J."/>
            <person name="Larimer F."/>
            <person name="Land M."/>
            <person name="Hauser L."/>
            <person name="Kyrpides N."/>
            <person name="Mikhailova N."/>
            <person name="Viollier P."/>
            <person name="Stephens C."/>
            <person name="Richardson P."/>
        </authorList>
    </citation>
    <scope>NUCLEOTIDE SEQUENCE [LARGE SCALE GENOMIC DNA]</scope>
    <source>
        <strain>MCS10</strain>
    </source>
</reference>
<name>RS20_MARMM</name>